<reference key="1">
    <citation type="journal article" date="2008" name="BMC Genomics">
        <title>The missing link: Bordetella petrii is endowed with both the metabolic versatility of environmental bacteria and virulence traits of pathogenic Bordetellae.</title>
        <authorList>
            <person name="Gross R."/>
            <person name="Guzman C.A."/>
            <person name="Sebaihia M."/>
            <person name="Martin dos Santos V.A.P."/>
            <person name="Pieper D.H."/>
            <person name="Koebnik R."/>
            <person name="Lechner M."/>
            <person name="Bartels D."/>
            <person name="Buhrmester J."/>
            <person name="Choudhuri J.V."/>
            <person name="Ebensen T."/>
            <person name="Gaigalat L."/>
            <person name="Herrmann S."/>
            <person name="Khachane A.N."/>
            <person name="Larisch C."/>
            <person name="Link S."/>
            <person name="Linke B."/>
            <person name="Meyer F."/>
            <person name="Mormann S."/>
            <person name="Nakunst D."/>
            <person name="Rueckert C."/>
            <person name="Schneiker-Bekel S."/>
            <person name="Schulze K."/>
            <person name="Voerholter F.-J."/>
            <person name="Yevsa T."/>
            <person name="Engle J.T."/>
            <person name="Goldman W.E."/>
            <person name="Puehler A."/>
            <person name="Goebel U.B."/>
            <person name="Goesmann A."/>
            <person name="Bloecker H."/>
            <person name="Kaiser O."/>
            <person name="Martinez-Arias R."/>
        </authorList>
    </citation>
    <scope>NUCLEOTIDE SEQUENCE [LARGE SCALE GENOMIC DNA]</scope>
    <source>
        <strain>ATCC BAA-461 / DSM 12804 / CCUG 43448</strain>
    </source>
</reference>
<gene>
    <name evidence="1" type="primary">kdsB</name>
    <name type="ordered locus">Bpet2672</name>
</gene>
<accession>A9IQ35</accession>
<sequence length="254" mass="26523">MSFVALIPARMASTRLPDKPLADIAGKPMVVRVAERAARSGATGVYIATDDARVAQAAAAHGHAALLTRADHPTGTDRLAEAVEQLGLADDTVVVNVQGDEPLIDPALVDAVAATLQASPDAAIATCACPLADAEALFNPNVVKVVCGAGGRALYFSRAPIPWARDALAGGTRVLAPGLPALHHIGLYAYRAGFLRRFPALPQGALEHYEALEQLRALEHGHAIVVHRTPQPPMAGVDTPADLERVRALYADGL</sequence>
<proteinExistence type="inferred from homology"/>
<evidence type="ECO:0000255" key="1">
    <source>
        <dbReference type="HAMAP-Rule" id="MF_00057"/>
    </source>
</evidence>
<evidence type="ECO:0000305" key="2"/>
<name>KDSB_BORPD</name>
<protein>
    <recommendedName>
        <fullName evidence="1">3-deoxy-manno-octulosonate cytidylyltransferase</fullName>
        <ecNumber evidence="1">2.7.7.38</ecNumber>
    </recommendedName>
    <alternativeName>
        <fullName evidence="1">CMP-2-keto-3-deoxyoctulosonic acid synthase</fullName>
        <shortName evidence="1">CKS</shortName>
        <shortName evidence="1">CMP-KDO synthase</shortName>
    </alternativeName>
</protein>
<comment type="function">
    <text evidence="1">Activates KDO (a required 8-carbon sugar) for incorporation into bacterial lipopolysaccharide in Gram-negative bacteria.</text>
</comment>
<comment type="catalytic activity">
    <reaction evidence="1">
        <text>3-deoxy-alpha-D-manno-oct-2-ulosonate + CTP = CMP-3-deoxy-beta-D-manno-octulosonate + diphosphate</text>
        <dbReference type="Rhea" id="RHEA:23448"/>
        <dbReference type="ChEBI" id="CHEBI:33019"/>
        <dbReference type="ChEBI" id="CHEBI:37563"/>
        <dbReference type="ChEBI" id="CHEBI:85986"/>
        <dbReference type="ChEBI" id="CHEBI:85987"/>
        <dbReference type="EC" id="2.7.7.38"/>
    </reaction>
</comment>
<comment type="pathway">
    <text evidence="1">Nucleotide-sugar biosynthesis; CMP-3-deoxy-D-manno-octulosonate biosynthesis; CMP-3-deoxy-D-manno-octulosonate from 3-deoxy-D-manno-octulosonate and CTP: step 1/1.</text>
</comment>
<comment type="pathway">
    <text evidence="1">Bacterial outer membrane biogenesis; lipopolysaccharide biosynthesis.</text>
</comment>
<comment type="subcellular location">
    <subcellularLocation>
        <location evidence="1">Cytoplasm</location>
    </subcellularLocation>
</comment>
<comment type="similarity">
    <text evidence="1">Belongs to the KdsB family.</text>
</comment>
<comment type="sequence caution" evidence="2">
    <conflict type="erroneous initiation">
        <sequence resource="EMBL-CDS" id="CAP43014"/>
    </conflict>
</comment>
<organism>
    <name type="scientific">Bordetella petrii (strain ATCC BAA-461 / DSM 12804 / CCUG 43448)</name>
    <dbReference type="NCBI Taxonomy" id="340100"/>
    <lineage>
        <taxon>Bacteria</taxon>
        <taxon>Pseudomonadati</taxon>
        <taxon>Pseudomonadota</taxon>
        <taxon>Betaproteobacteria</taxon>
        <taxon>Burkholderiales</taxon>
        <taxon>Alcaligenaceae</taxon>
        <taxon>Bordetella</taxon>
    </lineage>
</organism>
<keyword id="KW-0963">Cytoplasm</keyword>
<keyword id="KW-0448">Lipopolysaccharide biosynthesis</keyword>
<keyword id="KW-0548">Nucleotidyltransferase</keyword>
<keyword id="KW-0808">Transferase</keyword>
<dbReference type="EC" id="2.7.7.38" evidence="1"/>
<dbReference type="EMBL" id="AM902716">
    <property type="protein sequence ID" value="CAP43014.1"/>
    <property type="status" value="ALT_INIT"/>
    <property type="molecule type" value="Genomic_DNA"/>
</dbReference>
<dbReference type="SMR" id="A9IQ35"/>
<dbReference type="STRING" id="94624.Bpet2672"/>
<dbReference type="KEGG" id="bpt:Bpet2672"/>
<dbReference type="eggNOG" id="COG1212">
    <property type="taxonomic scope" value="Bacteria"/>
</dbReference>
<dbReference type="UniPathway" id="UPA00030"/>
<dbReference type="UniPathway" id="UPA00358">
    <property type="reaction ID" value="UER00476"/>
</dbReference>
<dbReference type="Proteomes" id="UP000001225">
    <property type="component" value="Chromosome"/>
</dbReference>
<dbReference type="GO" id="GO:0005829">
    <property type="term" value="C:cytosol"/>
    <property type="evidence" value="ECO:0007669"/>
    <property type="project" value="TreeGrafter"/>
</dbReference>
<dbReference type="GO" id="GO:0008690">
    <property type="term" value="F:3-deoxy-manno-octulosonate cytidylyltransferase activity"/>
    <property type="evidence" value="ECO:0007669"/>
    <property type="project" value="UniProtKB-UniRule"/>
</dbReference>
<dbReference type="GO" id="GO:0033468">
    <property type="term" value="P:CMP-keto-3-deoxy-D-manno-octulosonic acid biosynthetic process"/>
    <property type="evidence" value="ECO:0007669"/>
    <property type="project" value="UniProtKB-UniRule"/>
</dbReference>
<dbReference type="GO" id="GO:0009103">
    <property type="term" value="P:lipopolysaccharide biosynthetic process"/>
    <property type="evidence" value="ECO:0007669"/>
    <property type="project" value="UniProtKB-UniRule"/>
</dbReference>
<dbReference type="CDD" id="cd02517">
    <property type="entry name" value="CMP-KDO-Synthetase"/>
    <property type="match status" value="1"/>
</dbReference>
<dbReference type="FunFam" id="3.90.550.10:FF:000011">
    <property type="entry name" value="3-deoxy-manno-octulosonate cytidylyltransferase"/>
    <property type="match status" value="1"/>
</dbReference>
<dbReference type="Gene3D" id="3.90.550.10">
    <property type="entry name" value="Spore Coat Polysaccharide Biosynthesis Protein SpsA, Chain A"/>
    <property type="match status" value="1"/>
</dbReference>
<dbReference type="HAMAP" id="MF_00057">
    <property type="entry name" value="KdsB"/>
    <property type="match status" value="1"/>
</dbReference>
<dbReference type="InterPro" id="IPR003329">
    <property type="entry name" value="Cytidylyl_trans"/>
</dbReference>
<dbReference type="InterPro" id="IPR004528">
    <property type="entry name" value="KdsB"/>
</dbReference>
<dbReference type="InterPro" id="IPR029044">
    <property type="entry name" value="Nucleotide-diphossugar_trans"/>
</dbReference>
<dbReference type="NCBIfam" id="TIGR00466">
    <property type="entry name" value="kdsB"/>
    <property type="match status" value="1"/>
</dbReference>
<dbReference type="NCBIfam" id="NF003950">
    <property type="entry name" value="PRK05450.1-3"/>
    <property type="match status" value="1"/>
</dbReference>
<dbReference type="NCBIfam" id="NF003952">
    <property type="entry name" value="PRK05450.1-5"/>
    <property type="match status" value="1"/>
</dbReference>
<dbReference type="NCBIfam" id="NF009905">
    <property type="entry name" value="PRK13368.1"/>
    <property type="match status" value="1"/>
</dbReference>
<dbReference type="PANTHER" id="PTHR42866">
    <property type="entry name" value="3-DEOXY-MANNO-OCTULOSONATE CYTIDYLYLTRANSFERASE"/>
    <property type="match status" value="1"/>
</dbReference>
<dbReference type="PANTHER" id="PTHR42866:SF2">
    <property type="entry name" value="3-DEOXY-MANNO-OCTULOSONATE CYTIDYLYLTRANSFERASE, MITOCHONDRIAL"/>
    <property type="match status" value="1"/>
</dbReference>
<dbReference type="Pfam" id="PF02348">
    <property type="entry name" value="CTP_transf_3"/>
    <property type="match status" value="1"/>
</dbReference>
<dbReference type="SUPFAM" id="SSF53448">
    <property type="entry name" value="Nucleotide-diphospho-sugar transferases"/>
    <property type="match status" value="1"/>
</dbReference>
<feature type="chain" id="PRO_0000370007" description="3-deoxy-manno-octulosonate cytidylyltransferase">
    <location>
        <begin position="1"/>
        <end position="254"/>
    </location>
</feature>